<protein>
    <recommendedName>
        <fullName evidence="1">DNA-directed RNA polymerase subunit beta</fullName>
        <shortName evidence="1">RNAP subunit beta</shortName>
        <ecNumber evidence="1">2.7.7.6</ecNumber>
    </recommendedName>
    <alternativeName>
        <fullName evidence="1">RNA polymerase subunit beta</fullName>
    </alternativeName>
    <alternativeName>
        <fullName evidence="1">Transcriptase subunit beta</fullName>
    </alternativeName>
</protein>
<name>RPOB_SACEN</name>
<sequence length="1164" mass="128683">MAVSRATKVSAASNMMSGIPGAPKRVSFANIREPLEVPDLLDLQVQSFEWLVGDETWFQRRVDAGDENPVGGLEEVLSEISPIEDFSGSMSLSFSDPRFDEVKASVEECKDKDMTYAAPLFVTAEFTNHTTGEIKSQTVFMGDFPVMTDKGTFIINGTERVVVSQLVRSPGVYFDQSVDKTTDKDVYSVKIIPSRGAWLEFDVDKRDTVGVRIDRKRRQPVTVLLKALGWTAEAIRERFGFSETLMATLEKDHTAGQDEALLDIYRKLRPGEPPTKESAQTLLENLFFKEKRYDLARVGRYKVNKKLGLDLPFESGVLTEEDIVTTIEYLVRLHAGEAEMPDRGQGGDATIPVEVDDIDHFGNRRLRTVGELIQNQVRVGLSRMERVVRERMTTQDVEAITPQTLINIRPVVAAIKEFFGTSQLSQFMDQTNPIAGLTHKRRLSALGPGGLSRERAGMEVRDVHPSHYGRMCPIETPEGPNIGLIGSLATFARVNPFGFIETPYRKVVDGRVTDQIDYLTADEEDRFVKAQANTPIDDEGNFLADRVLGRRKGGEVELLAPTEIDYMDVSPRQMVSAATAMIPFLEHDDANRALMGANMQRQAVPLLRSEAPLVGTGMELRAAVDAGDVVTAEKAGVIEELCADYITVMADDGTRRTYRLQKFSRSNHGTCTNQKPIVNEGDRVEAGQVIADGPCTQNGEMALGKNLRVAIMPWEGHNYEDAIILSQRLVQDDVLTSIHIEEHEVDARDTKLGAEEITRDIPNVSEDVLADLDERGIIRIGAEVQGGDILVGKVTPKGETELTPEERLLRAIFGEKAREVRDTSLKVPHGETGKVIGVRVFNREDDDELPPGVNELVRVYVAQKRKIQDGDKLAGRHGNKGVIGKILPAEDMPFTEDGTPVDIILNTHGVPRRMNIGQILETHLGWIASQGWSIDGDPEWAKRLPEELYDVDPGTNTASPVFDGAREEEITGLLASTKPNRDGERMVKANGKAQLFDGRSGEPYPYPVAVGYMYILKLSHLVDDKIHARSTGPYSMITQQPLGGKAQFGGQRFGEMECWAMQAYGAAYTLQELLTIKSDDVVGRVKVYEAIVKGENIPEPGIPESFKVLLKELQSLCLNVEVLSSDGAAIEMRDGDDEDLERAAANLGINLSRNESPSVDDVVQ</sequence>
<gene>
    <name evidence="1" type="primary">rpoB</name>
    <name type="ordered locus">SACE_6854</name>
</gene>
<evidence type="ECO:0000255" key="1">
    <source>
        <dbReference type="HAMAP-Rule" id="MF_01321"/>
    </source>
</evidence>
<reference key="1">
    <citation type="journal article" date="2007" name="Nat. Biotechnol.">
        <title>Complete genome sequence of the erythromycin-producing bacterium Saccharopolyspora erythraea NRRL23338.</title>
        <authorList>
            <person name="Oliynyk M."/>
            <person name="Samborskyy M."/>
            <person name="Lester J.B."/>
            <person name="Mironenko T."/>
            <person name="Scott N."/>
            <person name="Dickens S."/>
            <person name="Haydock S.F."/>
            <person name="Leadlay P.F."/>
        </authorList>
    </citation>
    <scope>NUCLEOTIDE SEQUENCE [LARGE SCALE GENOMIC DNA]</scope>
    <source>
        <strain>ATCC 11635 / DSM 40517 / JCM 4748 / NBRC 13426 / NCIMB 8594 / NRRL 2338</strain>
    </source>
</reference>
<feature type="chain" id="PRO_0000300395" description="DNA-directed RNA polymerase subunit beta">
    <location>
        <begin position="1"/>
        <end position="1164"/>
    </location>
</feature>
<organism>
    <name type="scientific">Saccharopolyspora erythraea (strain ATCC 11635 / DSM 40517 / JCM 4748 / NBRC 13426 / NCIMB 8594 / NRRL 2338)</name>
    <dbReference type="NCBI Taxonomy" id="405948"/>
    <lineage>
        <taxon>Bacteria</taxon>
        <taxon>Bacillati</taxon>
        <taxon>Actinomycetota</taxon>
        <taxon>Actinomycetes</taxon>
        <taxon>Pseudonocardiales</taxon>
        <taxon>Pseudonocardiaceae</taxon>
        <taxon>Saccharopolyspora</taxon>
    </lineage>
</organism>
<comment type="function">
    <text evidence="1">DNA-dependent RNA polymerase catalyzes the transcription of DNA into RNA using the four ribonucleoside triphosphates as substrates.</text>
</comment>
<comment type="catalytic activity">
    <reaction evidence="1">
        <text>RNA(n) + a ribonucleoside 5'-triphosphate = RNA(n+1) + diphosphate</text>
        <dbReference type="Rhea" id="RHEA:21248"/>
        <dbReference type="Rhea" id="RHEA-COMP:14527"/>
        <dbReference type="Rhea" id="RHEA-COMP:17342"/>
        <dbReference type="ChEBI" id="CHEBI:33019"/>
        <dbReference type="ChEBI" id="CHEBI:61557"/>
        <dbReference type="ChEBI" id="CHEBI:140395"/>
        <dbReference type="EC" id="2.7.7.6"/>
    </reaction>
</comment>
<comment type="subunit">
    <text evidence="1">The RNAP catalytic core consists of 2 alpha, 1 beta, 1 beta' and 1 omega subunit. When a sigma factor is associated with the core the holoenzyme is formed, which can initiate transcription.</text>
</comment>
<comment type="similarity">
    <text evidence="1">Belongs to the RNA polymerase beta chain family.</text>
</comment>
<dbReference type="EC" id="2.7.7.6" evidence="1"/>
<dbReference type="EMBL" id="AM420293">
    <property type="protein sequence ID" value="CAM06018.1"/>
    <property type="molecule type" value="Genomic_DNA"/>
</dbReference>
<dbReference type="RefSeq" id="WP_011875176.1">
    <property type="nucleotide sequence ID" value="NC_009142.1"/>
</dbReference>
<dbReference type="SMR" id="A4FPP3"/>
<dbReference type="STRING" id="405948.SACE_6854"/>
<dbReference type="KEGG" id="sen:SACE_6854"/>
<dbReference type="eggNOG" id="COG0085">
    <property type="taxonomic scope" value="Bacteria"/>
</dbReference>
<dbReference type="HOGENOM" id="CLU_000524_4_1_11"/>
<dbReference type="OrthoDB" id="9803954at2"/>
<dbReference type="Proteomes" id="UP000006728">
    <property type="component" value="Chromosome"/>
</dbReference>
<dbReference type="GO" id="GO:0000428">
    <property type="term" value="C:DNA-directed RNA polymerase complex"/>
    <property type="evidence" value="ECO:0007669"/>
    <property type="project" value="UniProtKB-KW"/>
</dbReference>
<dbReference type="GO" id="GO:0003677">
    <property type="term" value="F:DNA binding"/>
    <property type="evidence" value="ECO:0007669"/>
    <property type="project" value="UniProtKB-UniRule"/>
</dbReference>
<dbReference type="GO" id="GO:0003899">
    <property type="term" value="F:DNA-directed RNA polymerase activity"/>
    <property type="evidence" value="ECO:0007669"/>
    <property type="project" value="UniProtKB-UniRule"/>
</dbReference>
<dbReference type="GO" id="GO:0032549">
    <property type="term" value="F:ribonucleoside binding"/>
    <property type="evidence" value="ECO:0007669"/>
    <property type="project" value="InterPro"/>
</dbReference>
<dbReference type="GO" id="GO:0006351">
    <property type="term" value="P:DNA-templated transcription"/>
    <property type="evidence" value="ECO:0007669"/>
    <property type="project" value="UniProtKB-UniRule"/>
</dbReference>
<dbReference type="CDD" id="cd00653">
    <property type="entry name" value="RNA_pol_B_RPB2"/>
    <property type="match status" value="1"/>
</dbReference>
<dbReference type="FunFam" id="3.90.1800.10:FF:000005">
    <property type="entry name" value="DNA-directed RNA polymerase subunit beta"/>
    <property type="match status" value="1"/>
</dbReference>
<dbReference type="Gene3D" id="2.40.50.100">
    <property type="match status" value="1"/>
</dbReference>
<dbReference type="Gene3D" id="2.40.50.150">
    <property type="match status" value="1"/>
</dbReference>
<dbReference type="Gene3D" id="3.90.1100.10">
    <property type="match status" value="1"/>
</dbReference>
<dbReference type="Gene3D" id="2.30.150.10">
    <property type="entry name" value="DNA-directed RNA polymerase, beta subunit, external 1 domain"/>
    <property type="match status" value="1"/>
</dbReference>
<dbReference type="Gene3D" id="2.40.270.10">
    <property type="entry name" value="DNA-directed RNA polymerase, subunit 2, domain 6"/>
    <property type="match status" value="1"/>
</dbReference>
<dbReference type="Gene3D" id="3.90.1800.10">
    <property type="entry name" value="RNA polymerase alpha subunit dimerisation domain"/>
    <property type="match status" value="1"/>
</dbReference>
<dbReference type="Gene3D" id="3.90.1110.10">
    <property type="entry name" value="RNA polymerase Rpb2, domain 2"/>
    <property type="match status" value="1"/>
</dbReference>
<dbReference type="HAMAP" id="MF_01321">
    <property type="entry name" value="RNApol_bact_RpoB"/>
    <property type="match status" value="1"/>
</dbReference>
<dbReference type="InterPro" id="IPR042107">
    <property type="entry name" value="DNA-dir_RNA_pol_bsu_ext_1_sf"/>
</dbReference>
<dbReference type="InterPro" id="IPR019462">
    <property type="entry name" value="DNA-dir_RNA_pol_bsu_external_1"/>
</dbReference>
<dbReference type="InterPro" id="IPR015712">
    <property type="entry name" value="DNA-dir_RNA_pol_su2"/>
</dbReference>
<dbReference type="InterPro" id="IPR007120">
    <property type="entry name" value="DNA-dir_RNAP_su2_dom"/>
</dbReference>
<dbReference type="InterPro" id="IPR037033">
    <property type="entry name" value="DNA-dir_RNAP_su2_hyb_sf"/>
</dbReference>
<dbReference type="InterPro" id="IPR010243">
    <property type="entry name" value="RNA_pol_bsu_bac"/>
</dbReference>
<dbReference type="InterPro" id="IPR007121">
    <property type="entry name" value="RNA_pol_bsu_CS"/>
</dbReference>
<dbReference type="InterPro" id="IPR007644">
    <property type="entry name" value="RNA_pol_bsu_protrusion"/>
</dbReference>
<dbReference type="InterPro" id="IPR007642">
    <property type="entry name" value="RNA_pol_Rpb2_2"/>
</dbReference>
<dbReference type="InterPro" id="IPR037034">
    <property type="entry name" value="RNA_pol_Rpb2_2_sf"/>
</dbReference>
<dbReference type="InterPro" id="IPR007645">
    <property type="entry name" value="RNA_pol_Rpb2_3"/>
</dbReference>
<dbReference type="InterPro" id="IPR007641">
    <property type="entry name" value="RNA_pol_Rpb2_7"/>
</dbReference>
<dbReference type="InterPro" id="IPR014724">
    <property type="entry name" value="RNA_pol_RPB2_OB-fold"/>
</dbReference>
<dbReference type="NCBIfam" id="NF001616">
    <property type="entry name" value="PRK00405.1"/>
    <property type="match status" value="1"/>
</dbReference>
<dbReference type="NCBIfam" id="TIGR02013">
    <property type="entry name" value="rpoB"/>
    <property type="match status" value="1"/>
</dbReference>
<dbReference type="PANTHER" id="PTHR20856">
    <property type="entry name" value="DNA-DIRECTED RNA POLYMERASE I SUBUNIT 2"/>
    <property type="match status" value="1"/>
</dbReference>
<dbReference type="Pfam" id="PF04563">
    <property type="entry name" value="RNA_pol_Rpb2_1"/>
    <property type="match status" value="1"/>
</dbReference>
<dbReference type="Pfam" id="PF04561">
    <property type="entry name" value="RNA_pol_Rpb2_2"/>
    <property type="match status" value="1"/>
</dbReference>
<dbReference type="Pfam" id="PF04565">
    <property type="entry name" value="RNA_pol_Rpb2_3"/>
    <property type="match status" value="1"/>
</dbReference>
<dbReference type="Pfam" id="PF10385">
    <property type="entry name" value="RNA_pol_Rpb2_45"/>
    <property type="match status" value="1"/>
</dbReference>
<dbReference type="Pfam" id="PF00562">
    <property type="entry name" value="RNA_pol_Rpb2_6"/>
    <property type="match status" value="1"/>
</dbReference>
<dbReference type="Pfam" id="PF04560">
    <property type="entry name" value="RNA_pol_Rpb2_7"/>
    <property type="match status" value="1"/>
</dbReference>
<dbReference type="SUPFAM" id="SSF64484">
    <property type="entry name" value="beta and beta-prime subunits of DNA dependent RNA-polymerase"/>
    <property type="match status" value="1"/>
</dbReference>
<dbReference type="PROSITE" id="PS01166">
    <property type="entry name" value="RNA_POL_BETA"/>
    <property type="match status" value="1"/>
</dbReference>
<proteinExistence type="inferred from homology"/>
<accession>A4FPP3</accession>
<keyword id="KW-0240">DNA-directed RNA polymerase</keyword>
<keyword id="KW-0548">Nucleotidyltransferase</keyword>
<keyword id="KW-1185">Reference proteome</keyword>
<keyword id="KW-0804">Transcription</keyword>
<keyword id="KW-0808">Transferase</keyword>